<accession>Q9XEE8</accession>
<accession>Q84K48</accession>
<dbReference type="EC" id="3.1.3.16"/>
<dbReference type="EMBL" id="AF085279">
    <property type="protein sequence ID" value="AAD25933.1"/>
    <property type="molecule type" value="Genomic_DNA"/>
</dbReference>
<dbReference type="EMBL" id="CP002685">
    <property type="protein sequence ID" value="AEC09793.1"/>
    <property type="molecule type" value="Genomic_DNA"/>
</dbReference>
<dbReference type="EMBL" id="BT004027">
    <property type="protein sequence ID" value="AAO42063.1"/>
    <property type="status" value="ALT_SEQ"/>
    <property type="molecule type" value="mRNA"/>
</dbReference>
<dbReference type="EMBL" id="BT005076">
    <property type="protein sequence ID" value="AAO50609.1"/>
    <property type="status" value="ALT_SEQ"/>
    <property type="molecule type" value="mRNA"/>
</dbReference>
<dbReference type="PIR" id="C84826">
    <property type="entry name" value="C84826"/>
</dbReference>
<dbReference type="RefSeq" id="NP_181547.1">
    <property type="nucleotide sequence ID" value="NM_129576.3"/>
</dbReference>
<dbReference type="SMR" id="Q9XEE8"/>
<dbReference type="BioGRID" id="3947">
    <property type="interactions" value="4"/>
</dbReference>
<dbReference type="FunCoup" id="Q9XEE8">
    <property type="interactions" value="23"/>
</dbReference>
<dbReference type="STRING" id="3702.Q9XEE8"/>
<dbReference type="PaxDb" id="3702-AT2G40180.1"/>
<dbReference type="ProteomicsDB" id="248797"/>
<dbReference type="EnsemblPlants" id="AT2G40180.1">
    <property type="protein sequence ID" value="AT2G40180.1"/>
    <property type="gene ID" value="AT2G40180"/>
</dbReference>
<dbReference type="GeneID" id="818609"/>
<dbReference type="Gramene" id="AT2G40180.1">
    <property type="protein sequence ID" value="AT2G40180.1"/>
    <property type="gene ID" value="AT2G40180"/>
</dbReference>
<dbReference type="KEGG" id="ath:AT2G40180"/>
<dbReference type="Araport" id="AT2G40180"/>
<dbReference type="TAIR" id="AT2G40180">
    <property type="gene designation" value="PP2C5"/>
</dbReference>
<dbReference type="eggNOG" id="KOG0698">
    <property type="taxonomic scope" value="Eukaryota"/>
</dbReference>
<dbReference type="HOGENOM" id="CLU_013173_5_1_1"/>
<dbReference type="InParanoid" id="Q9XEE8"/>
<dbReference type="OMA" id="MKRSVIM"/>
<dbReference type="PhylomeDB" id="Q9XEE8"/>
<dbReference type="PRO" id="PR:Q9XEE8"/>
<dbReference type="Proteomes" id="UP000006548">
    <property type="component" value="Chromosome 2"/>
</dbReference>
<dbReference type="ExpressionAtlas" id="Q9XEE8">
    <property type="expression patterns" value="baseline and differential"/>
</dbReference>
<dbReference type="GO" id="GO:0005634">
    <property type="term" value="C:nucleus"/>
    <property type="evidence" value="ECO:0000314"/>
    <property type="project" value="TAIR"/>
</dbReference>
<dbReference type="GO" id="GO:0046872">
    <property type="term" value="F:metal ion binding"/>
    <property type="evidence" value="ECO:0007669"/>
    <property type="project" value="UniProtKB-KW"/>
</dbReference>
<dbReference type="GO" id="GO:0004722">
    <property type="term" value="F:protein serine/threonine phosphatase activity"/>
    <property type="evidence" value="ECO:0000314"/>
    <property type="project" value="TAIR"/>
</dbReference>
<dbReference type="GO" id="GO:0009738">
    <property type="term" value="P:abscisic acid-activated signaling pathway"/>
    <property type="evidence" value="ECO:0000315"/>
    <property type="project" value="TAIR"/>
</dbReference>
<dbReference type="GO" id="GO:0010440">
    <property type="term" value="P:stomatal lineage progression"/>
    <property type="evidence" value="ECO:0000315"/>
    <property type="project" value="TAIR"/>
</dbReference>
<dbReference type="CDD" id="cd00143">
    <property type="entry name" value="PP2Cc"/>
    <property type="match status" value="1"/>
</dbReference>
<dbReference type="FunFam" id="3.60.40.10:FF:000044">
    <property type="entry name" value="probable protein phosphatase 2C 25"/>
    <property type="match status" value="1"/>
</dbReference>
<dbReference type="Gene3D" id="3.60.40.10">
    <property type="entry name" value="PPM-type phosphatase domain"/>
    <property type="match status" value="1"/>
</dbReference>
<dbReference type="InterPro" id="IPR015655">
    <property type="entry name" value="PP2C"/>
</dbReference>
<dbReference type="InterPro" id="IPR000222">
    <property type="entry name" value="PP2C_BS"/>
</dbReference>
<dbReference type="InterPro" id="IPR036457">
    <property type="entry name" value="PPM-type-like_dom_sf"/>
</dbReference>
<dbReference type="InterPro" id="IPR001932">
    <property type="entry name" value="PPM-type_phosphatase-like_dom"/>
</dbReference>
<dbReference type="PANTHER" id="PTHR47992">
    <property type="entry name" value="PROTEIN PHOSPHATASE"/>
    <property type="match status" value="1"/>
</dbReference>
<dbReference type="Pfam" id="PF00481">
    <property type="entry name" value="PP2C"/>
    <property type="match status" value="1"/>
</dbReference>
<dbReference type="SMART" id="SM00331">
    <property type="entry name" value="PP2C_SIG"/>
    <property type="match status" value="1"/>
</dbReference>
<dbReference type="SMART" id="SM00332">
    <property type="entry name" value="PP2Cc"/>
    <property type="match status" value="1"/>
</dbReference>
<dbReference type="SUPFAM" id="SSF81606">
    <property type="entry name" value="PP2C-like"/>
    <property type="match status" value="1"/>
</dbReference>
<dbReference type="PROSITE" id="PS01032">
    <property type="entry name" value="PPM_1"/>
    <property type="match status" value="1"/>
</dbReference>
<dbReference type="PROSITE" id="PS51746">
    <property type="entry name" value="PPM_2"/>
    <property type="match status" value="1"/>
</dbReference>
<name>P2C30_ARATH</name>
<evidence type="ECO:0000250" key="1"/>
<evidence type="ECO:0000255" key="2">
    <source>
        <dbReference type="PROSITE-ProRule" id="PRU01082"/>
    </source>
</evidence>
<evidence type="ECO:0000256" key="3">
    <source>
        <dbReference type="SAM" id="MobiDB-lite"/>
    </source>
</evidence>
<evidence type="ECO:0000305" key="4"/>
<gene>
    <name type="primary">PP2C5</name>
    <name type="ordered locus">At2g40180</name>
    <name type="ORF">T7M7.17</name>
</gene>
<organism>
    <name type="scientific">Arabidopsis thaliana</name>
    <name type="common">Mouse-ear cress</name>
    <dbReference type="NCBI Taxonomy" id="3702"/>
    <lineage>
        <taxon>Eukaryota</taxon>
        <taxon>Viridiplantae</taxon>
        <taxon>Streptophyta</taxon>
        <taxon>Embryophyta</taxon>
        <taxon>Tracheophyta</taxon>
        <taxon>Spermatophyta</taxon>
        <taxon>Magnoliopsida</taxon>
        <taxon>eudicotyledons</taxon>
        <taxon>Gunneridae</taxon>
        <taxon>Pentapetalae</taxon>
        <taxon>rosids</taxon>
        <taxon>malvids</taxon>
        <taxon>Brassicales</taxon>
        <taxon>Brassicaceae</taxon>
        <taxon>Camelineae</taxon>
        <taxon>Arabidopsis</taxon>
    </lineage>
</organism>
<keyword id="KW-0378">Hydrolase</keyword>
<keyword id="KW-0460">Magnesium</keyword>
<keyword id="KW-0464">Manganese</keyword>
<keyword id="KW-0479">Metal-binding</keyword>
<keyword id="KW-0904">Protein phosphatase</keyword>
<keyword id="KW-1185">Reference proteome</keyword>
<comment type="catalytic activity">
    <reaction>
        <text>O-phospho-L-seryl-[protein] + H2O = L-seryl-[protein] + phosphate</text>
        <dbReference type="Rhea" id="RHEA:20629"/>
        <dbReference type="Rhea" id="RHEA-COMP:9863"/>
        <dbReference type="Rhea" id="RHEA-COMP:11604"/>
        <dbReference type="ChEBI" id="CHEBI:15377"/>
        <dbReference type="ChEBI" id="CHEBI:29999"/>
        <dbReference type="ChEBI" id="CHEBI:43474"/>
        <dbReference type="ChEBI" id="CHEBI:83421"/>
        <dbReference type="EC" id="3.1.3.16"/>
    </reaction>
</comment>
<comment type="catalytic activity">
    <reaction>
        <text>O-phospho-L-threonyl-[protein] + H2O = L-threonyl-[protein] + phosphate</text>
        <dbReference type="Rhea" id="RHEA:47004"/>
        <dbReference type="Rhea" id="RHEA-COMP:11060"/>
        <dbReference type="Rhea" id="RHEA-COMP:11605"/>
        <dbReference type="ChEBI" id="CHEBI:15377"/>
        <dbReference type="ChEBI" id="CHEBI:30013"/>
        <dbReference type="ChEBI" id="CHEBI:43474"/>
        <dbReference type="ChEBI" id="CHEBI:61977"/>
        <dbReference type="EC" id="3.1.3.16"/>
    </reaction>
</comment>
<comment type="cofactor">
    <cofactor evidence="1">
        <name>Mg(2+)</name>
        <dbReference type="ChEBI" id="CHEBI:18420"/>
    </cofactor>
    <cofactor evidence="1">
        <name>Mn(2+)</name>
        <dbReference type="ChEBI" id="CHEBI:29035"/>
    </cofactor>
    <text evidence="1">Binds 2 magnesium or manganese ions per subunit.</text>
</comment>
<comment type="similarity">
    <text evidence="4">Belongs to the PP2C family.</text>
</comment>
<comment type="sequence caution" evidence="4">
    <conflict type="miscellaneous discrepancy">
        <sequence resource="EMBL-CDS" id="AAO42063"/>
    </conflict>
    <text>Probable cloning artifact leading to a large internal deletion.</text>
</comment>
<comment type="sequence caution" evidence="4">
    <conflict type="miscellaneous discrepancy">
        <sequence resource="EMBL-CDS" id="AAO50609"/>
    </conflict>
    <text>Probable cloning artifact leading to a large internal deletion.</text>
</comment>
<protein>
    <recommendedName>
        <fullName>Probable protein phosphatase 2C 30</fullName>
        <shortName>AtPP2C30</shortName>
        <ecNumber>3.1.3.16</ecNumber>
    </recommendedName>
    <alternativeName>
        <fullName>AthPP2C5</fullName>
    </alternativeName>
</protein>
<feature type="chain" id="PRO_0000367958" description="Probable protein phosphatase 2C 30">
    <location>
        <begin position="1"/>
        <end position="390"/>
    </location>
</feature>
<feature type="domain" description="PPM-type phosphatase" evidence="2">
    <location>
        <begin position="128"/>
        <end position="385"/>
    </location>
</feature>
<feature type="region of interest" description="Disordered" evidence="3">
    <location>
        <begin position="1"/>
        <end position="20"/>
    </location>
</feature>
<feature type="region of interest" description="Disordered" evidence="3">
    <location>
        <begin position="40"/>
        <end position="85"/>
    </location>
</feature>
<feature type="compositionally biased region" description="Polar residues" evidence="3">
    <location>
        <begin position="1"/>
        <end position="10"/>
    </location>
</feature>
<feature type="compositionally biased region" description="Low complexity" evidence="3">
    <location>
        <begin position="44"/>
        <end position="61"/>
    </location>
</feature>
<feature type="binding site" evidence="1">
    <location>
        <position position="166"/>
    </location>
    <ligand>
        <name>Mn(2+)</name>
        <dbReference type="ChEBI" id="CHEBI:29035"/>
        <label>1</label>
    </ligand>
</feature>
<feature type="binding site" evidence="1">
    <location>
        <position position="166"/>
    </location>
    <ligand>
        <name>Mn(2+)</name>
        <dbReference type="ChEBI" id="CHEBI:29035"/>
        <label>2</label>
    </ligand>
</feature>
<feature type="binding site" evidence="1">
    <location>
        <position position="167"/>
    </location>
    <ligand>
        <name>Mn(2+)</name>
        <dbReference type="ChEBI" id="CHEBI:29035"/>
        <label>1</label>
    </ligand>
</feature>
<feature type="binding site" evidence="1">
    <location>
        <position position="331"/>
    </location>
    <ligand>
        <name>Mn(2+)</name>
        <dbReference type="ChEBI" id="CHEBI:29035"/>
        <label>2</label>
    </ligand>
</feature>
<feature type="binding site" evidence="1">
    <location>
        <position position="376"/>
    </location>
    <ligand>
        <name>Mn(2+)</name>
        <dbReference type="ChEBI" id="CHEBI:29035"/>
        <label>2</label>
    </ligand>
</feature>
<proteinExistence type="evidence at transcript level"/>
<reference key="1">
    <citation type="journal article" date="1999" name="Genome Res.">
        <title>A cluster of ABA-regulated genes on Arabidopsis thaliana BAC T07M07.</title>
        <authorList>
            <person name="Wang M.L."/>
            <person name="Belmonte S."/>
            <person name="Kim U."/>
            <person name="Dolan M."/>
            <person name="Morris J.W."/>
            <person name="Goodman H.M."/>
        </authorList>
    </citation>
    <scope>NUCLEOTIDE SEQUENCE [GENOMIC DNA]</scope>
</reference>
<reference key="2">
    <citation type="journal article" date="1999" name="Nature">
        <title>Sequence and analysis of chromosome 2 of the plant Arabidopsis thaliana.</title>
        <authorList>
            <person name="Lin X."/>
            <person name="Kaul S."/>
            <person name="Rounsley S.D."/>
            <person name="Shea T.P."/>
            <person name="Benito M.-I."/>
            <person name="Town C.D."/>
            <person name="Fujii C.Y."/>
            <person name="Mason T.M."/>
            <person name="Bowman C.L."/>
            <person name="Barnstead M.E."/>
            <person name="Feldblyum T.V."/>
            <person name="Buell C.R."/>
            <person name="Ketchum K.A."/>
            <person name="Lee J.J."/>
            <person name="Ronning C.M."/>
            <person name="Koo H.L."/>
            <person name="Moffat K.S."/>
            <person name="Cronin L.A."/>
            <person name="Shen M."/>
            <person name="Pai G."/>
            <person name="Van Aken S."/>
            <person name="Umayam L."/>
            <person name="Tallon L.J."/>
            <person name="Gill J.E."/>
            <person name="Adams M.D."/>
            <person name="Carrera A.J."/>
            <person name="Creasy T.H."/>
            <person name="Goodman H.M."/>
            <person name="Somerville C.R."/>
            <person name="Copenhaver G.P."/>
            <person name="Preuss D."/>
            <person name="Nierman W.C."/>
            <person name="White O."/>
            <person name="Eisen J.A."/>
            <person name="Salzberg S.L."/>
            <person name="Fraser C.M."/>
            <person name="Venter J.C."/>
        </authorList>
    </citation>
    <scope>NUCLEOTIDE SEQUENCE [LARGE SCALE GENOMIC DNA]</scope>
    <source>
        <strain>cv. Columbia</strain>
    </source>
</reference>
<reference key="3">
    <citation type="journal article" date="2017" name="Plant J.">
        <title>Araport11: a complete reannotation of the Arabidopsis thaliana reference genome.</title>
        <authorList>
            <person name="Cheng C.Y."/>
            <person name="Krishnakumar V."/>
            <person name="Chan A.P."/>
            <person name="Thibaud-Nissen F."/>
            <person name="Schobel S."/>
            <person name="Town C.D."/>
        </authorList>
    </citation>
    <scope>GENOME REANNOTATION</scope>
    <source>
        <strain>cv. Columbia</strain>
    </source>
</reference>
<reference key="4">
    <citation type="journal article" date="2003" name="Science">
        <title>Empirical analysis of transcriptional activity in the Arabidopsis genome.</title>
        <authorList>
            <person name="Yamada K."/>
            <person name="Lim J."/>
            <person name="Dale J.M."/>
            <person name="Chen H."/>
            <person name="Shinn P."/>
            <person name="Palm C.J."/>
            <person name="Southwick A.M."/>
            <person name="Wu H.C."/>
            <person name="Kim C.J."/>
            <person name="Nguyen M."/>
            <person name="Pham P.K."/>
            <person name="Cheuk R.F."/>
            <person name="Karlin-Newmann G."/>
            <person name="Liu S.X."/>
            <person name="Lam B."/>
            <person name="Sakano H."/>
            <person name="Wu T."/>
            <person name="Yu G."/>
            <person name="Miranda M."/>
            <person name="Quach H.L."/>
            <person name="Tripp M."/>
            <person name="Chang C.H."/>
            <person name="Lee J.M."/>
            <person name="Toriumi M.J."/>
            <person name="Chan M.M."/>
            <person name="Tang C.C."/>
            <person name="Onodera C.S."/>
            <person name="Deng J.M."/>
            <person name="Akiyama K."/>
            <person name="Ansari Y."/>
            <person name="Arakawa T."/>
            <person name="Banh J."/>
            <person name="Banno F."/>
            <person name="Bowser L."/>
            <person name="Brooks S.Y."/>
            <person name="Carninci P."/>
            <person name="Chao Q."/>
            <person name="Choy N."/>
            <person name="Enju A."/>
            <person name="Goldsmith A.D."/>
            <person name="Gurjal M."/>
            <person name="Hansen N.F."/>
            <person name="Hayashizaki Y."/>
            <person name="Johnson-Hopson C."/>
            <person name="Hsuan V.W."/>
            <person name="Iida K."/>
            <person name="Karnes M."/>
            <person name="Khan S."/>
            <person name="Koesema E."/>
            <person name="Ishida J."/>
            <person name="Jiang P.X."/>
            <person name="Jones T."/>
            <person name="Kawai J."/>
            <person name="Kamiya A."/>
            <person name="Meyers C."/>
            <person name="Nakajima M."/>
            <person name="Narusaka M."/>
            <person name="Seki M."/>
            <person name="Sakurai T."/>
            <person name="Satou M."/>
            <person name="Tamse R."/>
            <person name="Vaysberg M."/>
            <person name="Wallender E.K."/>
            <person name="Wong C."/>
            <person name="Yamamura Y."/>
            <person name="Yuan S."/>
            <person name="Shinozaki K."/>
            <person name="Davis R.W."/>
            <person name="Theologis A."/>
            <person name="Ecker J.R."/>
        </authorList>
    </citation>
    <scope>NUCLEOTIDE SEQUENCE [LARGE SCALE MRNA]</scope>
    <source>
        <strain>cv. Columbia</strain>
    </source>
</reference>
<reference key="5">
    <citation type="journal article" date="2008" name="BMC Genomics">
        <title>Genome-wide and expression analysis of protein phosphatase 2C in rice and Arabidopsis.</title>
        <authorList>
            <person name="Xue T."/>
            <person name="Wang D."/>
            <person name="Zhang S."/>
            <person name="Ehlting J."/>
            <person name="Ni F."/>
            <person name="Jacab S."/>
            <person name="Zheng C."/>
            <person name="Zhong Y."/>
        </authorList>
    </citation>
    <scope>GENE FAMILY</scope>
    <scope>NOMENCLATURE</scope>
</reference>
<sequence length="390" mass="42595">MQLSKNPIKQTRNREKNYTDDFTMKRSVIMAPESPVFFPPPLVFSPTSVKTPLSSPRSSPPKLTMVACPPRKPKETKTTGSDSETVLKRKRPPMLDLTAAPTVASWCSTTRETAEKGAEVVEAEEDGYYSVYCKRGRRGPMEDRYFAAVDRNDDGGYKNAFFGVFDGHGGSKAAEFAAMNLGNNIEAAMASARSGEDGCSMESAIREGYIKTDEDFLKEGSRGGACCVTALISKGELAVSNAGDCRAVMSRGGTAEALTSDHNPSQANELKRIEALGGYVDCCNGVWRIQGTLAVSRGIGDRYLKEWVIAEPETRTLRIKPEFEFLILASDGLWDKVTNQEAVDVVRPYCVGVENPMTLSACKKLAELSVKRGSLDDISLIIIQLQNFLP</sequence>